<gene>
    <name evidence="1" type="primary">ubiG</name>
    <name type="ordered locus">amb1611</name>
</gene>
<accession>Q2W6W0</accession>
<name>UBIG_PARM1</name>
<organism>
    <name type="scientific">Paramagnetospirillum magneticum (strain ATCC 700264 / AMB-1)</name>
    <name type="common">Magnetospirillum magneticum</name>
    <dbReference type="NCBI Taxonomy" id="342108"/>
    <lineage>
        <taxon>Bacteria</taxon>
        <taxon>Pseudomonadati</taxon>
        <taxon>Pseudomonadota</taxon>
        <taxon>Alphaproteobacteria</taxon>
        <taxon>Rhodospirillales</taxon>
        <taxon>Magnetospirillaceae</taxon>
        <taxon>Paramagnetospirillum</taxon>
    </lineage>
</organism>
<evidence type="ECO:0000255" key="1">
    <source>
        <dbReference type="HAMAP-Rule" id="MF_00472"/>
    </source>
</evidence>
<comment type="function">
    <text evidence="1">O-methyltransferase that catalyzes the 2 O-methylation steps in the ubiquinone biosynthetic pathway.</text>
</comment>
<comment type="catalytic activity">
    <reaction evidence="1">
        <text>a 3-demethylubiquinol + S-adenosyl-L-methionine = a ubiquinol + S-adenosyl-L-homocysteine + H(+)</text>
        <dbReference type="Rhea" id="RHEA:44380"/>
        <dbReference type="Rhea" id="RHEA-COMP:9566"/>
        <dbReference type="Rhea" id="RHEA-COMP:10914"/>
        <dbReference type="ChEBI" id="CHEBI:15378"/>
        <dbReference type="ChEBI" id="CHEBI:17976"/>
        <dbReference type="ChEBI" id="CHEBI:57856"/>
        <dbReference type="ChEBI" id="CHEBI:59789"/>
        <dbReference type="ChEBI" id="CHEBI:84422"/>
        <dbReference type="EC" id="2.1.1.64"/>
    </reaction>
</comment>
<comment type="catalytic activity">
    <reaction evidence="1">
        <text>a 3-(all-trans-polyprenyl)benzene-1,2-diol + S-adenosyl-L-methionine = a 2-methoxy-6-(all-trans-polyprenyl)phenol + S-adenosyl-L-homocysteine + H(+)</text>
        <dbReference type="Rhea" id="RHEA:31411"/>
        <dbReference type="Rhea" id="RHEA-COMP:9550"/>
        <dbReference type="Rhea" id="RHEA-COMP:9551"/>
        <dbReference type="ChEBI" id="CHEBI:15378"/>
        <dbReference type="ChEBI" id="CHEBI:57856"/>
        <dbReference type="ChEBI" id="CHEBI:59789"/>
        <dbReference type="ChEBI" id="CHEBI:62729"/>
        <dbReference type="ChEBI" id="CHEBI:62731"/>
        <dbReference type="EC" id="2.1.1.222"/>
    </reaction>
</comment>
<comment type="pathway">
    <text evidence="1">Cofactor biosynthesis; ubiquinone biosynthesis.</text>
</comment>
<comment type="similarity">
    <text evidence="1">Belongs to the methyltransferase superfamily. UbiG/COQ3 family.</text>
</comment>
<proteinExistence type="inferred from homology"/>
<protein>
    <recommendedName>
        <fullName evidence="1">Ubiquinone biosynthesis O-methyltransferase</fullName>
    </recommendedName>
    <alternativeName>
        <fullName evidence="1">2-polyprenyl-6-hydroxyphenol methylase</fullName>
        <ecNumber evidence="1">2.1.1.222</ecNumber>
    </alternativeName>
    <alternativeName>
        <fullName evidence="1">3-demethylubiquinone 3-O-methyltransferase</fullName>
        <ecNumber evidence="1">2.1.1.64</ecNumber>
    </alternativeName>
</protein>
<dbReference type="EC" id="2.1.1.222" evidence="1"/>
<dbReference type="EC" id="2.1.1.64" evidence="1"/>
<dbReference type="EMBL" id="AP007255">
    <property type="protein sequence ID" value="BAE50415.1"/>
    <property type="molecule type" value="Genomic_DNA"/>
</dbReference>
<dbReference type="SMR" id="Q2W6W0"/>
<dbReference type="STRING" id="342108.amb1611"/>
<dbReference type="KEGG" id="mag:amb1611"/>
<dbReference type="HOGENOM" id="CLU_042432_0_0_5"/>
<dbReference type="UniPathway" id="UPA00232"/>
<dbReference type="Proteomes" id="UP000007058">
    <property type="component" value="Chromosome"/>
</dbReference>
<dbReference type="GO" id="GO:0102208">
    <property type="term" value="F:2-polyprenyl-6-hydroxyphenol methylase activity"/>
    <property type="evidence" value="ECO:0007669"/>
    <property type="project" value="UniProtKB-EC"/>
</dbReference>
<dbReference type="GO" id="GO:0061542">
    <property type="term" value="F:3-demethylubiquinol 3-O-methyltransferase activity"/>
    <property type="evidence" value="ECO:0007669"/>
    <property type="project" value="UniProtKB-UniRule"/>
</dbReference>
<dbReference type="GO" id="GO:0010420">
    <property type="term" value="F:polyprenyldihydroxybenzoate methyltransferase activity"/>
    <property type="evidence" value="ECO:0007669"/>
    <property type="project" value="InterPro"/>
</dbReference>
<dbReference type="GO" id="GO:0032259">
    <property type="term" value="P:methylation"/>
    <property type="evidence" value="ECO:0007669"/>
    <property type="project" value="UniProtKB-KW"/>
</dbReference>
<dbReference type="CDD" id="cd02440">
    <property type="entry name" value="AdoMet_MTases"/>
    <property type="match status" value="1"/>
</dbReference>
<dbReference type="Gene3D" id="3.40.50.150">
    <property type="entry name" value="Vaccinia Virus protein VP39"/>
    <property type="match status" value="1"/>
</dbReference>
<dbReference type="HAMAP" id="MF_00472">
    <property type="entry name" value="UbiG"/>
    <property type="match status" value="1"/>
</dbReference>
<dbReference type="InterPro" id="IPR029063">
    <property type="entry name" value="SAM-dependent_MTases_sf"/>
</dbReference>
<dbReference type="InterPro" id="IPR010233">
    <property type="entry name" value="UbiG_MeTrfase"/>
</dbReference>
<dbReference type="NCBIfam" id="TIGR01983">
    <property type="entry name" value="UbiG"/>
    <property type="match status" value="1"/>
</dbReference>
<dbReference type="PANTHER" id="PTHR43464">
    <property type="entry name" value="METHYLTRANSFERASE"/>
    <property type="match status" value="1"/>
</dbReference>
<dbReference type="PANTHER" id="PTHR43464:SF19">
    <property type="entry name" value="UBIQUINONE BIOSYNTHESIS O-METHYLTRANSFERASE, MITOCHONDRIAL"/>
    <property type="match status" value="1"/>
</dbReference>
<dbReference type="Pfam" id="PF13489">
    <property type="entry name" value="Methyltransf_23"/>
    <property type="match status" value="1"/>
</dbReference>
<dbReference type="SUPFAM" id="SSF53335">
    <property type="entry name" value="S-adenosyl-L-methionine-dependent methyltransferases"/>
    <property type="match status" value="1"/>
</dbReference>
<reference key="1">
    <citation type="journal article" date="2005" name="DNA Res.">
        <title>Complete genome sequence of the facultative anaerobic magnetotactic bacterium Magnetospirillum sp. strain AMB-1.</title>
        <authorList>
            <person name="Matsunaga T."/>
            <person name="Okamura Y."/>
            <person name="Fukuda Y."/>
            <person name="Wahyudi A.T."/>
            <person name="Murase Y."/>
            <person name="Takeyama H."/>
        </authorList>
    </citation>
    <scope>NUCLEOTIDE SEQUENCE [LARGE SCALE GENOMIC DNA]</scope>
    <source>
        <strain>ATCC 700264 / AMB-1</strain>
    </source>
</reference>
<keyword id="KW-0489">Methyltransferase</keyword>
<keyword id="KW-0949">S-adenosyl-L-methionine</keyword>
<keyword id="KW-0808">Transferase</keyword>
<keyword id="KW-0831">Ubiquinone biosynthesis</keyword>
<sequence>MELKFMDHVGTASPEEIARFTAMAEAWWDPQGKFKPLHRFNPVRLAFMRRHFAAHFGRDESLMRPFEGLTLLDVGSGGGLLSEPLARMGFAVTGIDAGDKNVAVARLHAEQTGVPVDYRVSTPEQLDPNEAFDVVLSMEVVEHVPDVSAFLGHATARLKPGGVFMGATLNRTAKAWALAVVGAEYVLGWLPKGTHDWNKFVRPSEFAAMLRDRGITVRQMAGMAFNPLSDTWRETDNLDVNYMLFGVKG</sequence>
<feature type="chain" id="PRO_0000241712" description="Ubiquinone biosynthesis O-methyltransferase">
    <location>
        <begin position="1"/>
        <end position="249"/>
    </location>
</feature>
<feature type="binding site" evidence="1">
    <location>
        <position position="44"/>
    </location>
    <ligand>
        <name>S-adenosyl-L-methionine</name>
        <dbReference type="ChEBI" id="CHEBI:59789"/>
    </ligand>
</feature>
<feature type="binding site" evidence="1">
    <location>
        <position position="75"/>
    </location>
    <ligand>
        <name>S-adenosyl-L-methionine</name>
        <dbReference type="ChEBI" id="CHEBI:59789"/>
    </ligand>
</feature>
<feature type="binding site" evidence="1">
    <location>
        <position position="96"/>
    </location>
    <ligand>
        <name>S-adenosyl-L-methionine</name>
        <dbReference type="ChEBI" id="CHEBI:59789"/>
    </ligand>
</feature>
<feature type="binding site" evidence="1">
    <location>
        <position position="138"/>
    </location>
    <ligand>
        <name>S-adenosyl-L-methionine</name>
        <dbReference type="ChEBI" id="CHEBI:59789"/>
    </ligand>
</feature>